<protein>
    <recommendedName>
        <fullName evidence="1">Ribonuclease HII</fullName>
        <shortName evidence="1">RNase HII</shortName>
        <ecNumber evidence="1">3.1.26.4</ecNumber>
    </recommendedName>
</protein>
<proteinExistence type="inferred from homology"/>
<keyword id="KW-0963">Cytoplasm</keyword>
<keyword id="KW-0255">Endonuclease</keyword>
<keyword id="KW-0378">Hydrolase</keyword>
<keyword id="KW-0464">Manganese</keyword>
<keyword id="KW-0479">Metal-binding</keyword>
<keyword id="KW-0540">Nuclease</keyword>
<keyword id="KW-1185">Reference proteome</keyword>
<accession>B2A2P0</accession>
<evidence type="ECO:0000255" key="1">
    <source>
        <dbReference type="HAMAP-Rule" id="MF_00052"/>
    </source>
</evidence>
<evidence type="ECO:0000255" key="2">
    <source>
        <dbReference type="PROSITE-ProRule" id="PRU01319"/>
    </source>
</evidence>
<reference key="1">
    <citation type="submission" date="2008-04" db="EMBL/GenBank/DDBJ databases">
        <title>Complete sequence of chromosome of Natranaerobius thermophilus JW/NM-WN-LF.</title>
        <authorList>
            <consortium name="US DOE Joint Genome Institute"/>
            <person name="Copeland A."/>
            <person name="Lucas S."/>
            <person name="Lapidus A."/>
            <person name="Glavina del Rio T."/>
            <person name="Dalin E."/>
            <person name="Tice H."/>
            <person name="Bruce D."/>
            <person name="Goodwin L."/>
            <person name="Pitluck S."/>
            <person name="Chertkov O."/>
            <person name="Brettin T."/>
            <person name="Detter J.C."/>
            <person name="Han C."/>
            <person name="Kuske C.R."/>
            <person name="Schmutz J."/>
            <person name="Larimer F."/>
            <person name="Land M."/>
            <person name="Hauser L."/>
            <person name="Kyrpides N."/>
            <person name="Lykidis A."/>
            <person name="Mesbah N.M."/>
            <person name="Wiegel J."/>
        </authorList>
    </citation>
    <scope>NUCLEOTIDE SEQUENCE [LARGE SCALE GENOMIC DNA]</scope>
    <source>
        <strain>ATCC BAA-1301 / DSM 18059 / JW/NM-WN-LF</strain>
    </source>
</reference>
<comment type="function">
    <text evidence="1">Endonuclease that specifically degrades the RNA of RNA-DNA hybrids.</text>
</comment>
<comment type="catalytic activity">
    <reaction evidence="1">
        <text>Endonucleolytic cleavage to 5'-phosphomonoester.</text>
        <dbReference type="EC" id="3.1.26.4"/>
    </reaction>
</comment>
<comment type="cofactor">
    <cofactor evidence="1">
        <name>Mn(2+)</name>
        <dbReference type="ChEBI" id="CHEBI:29035"/>
    </cofactor>
    <cofactor evidence="1">
        <name>Mg(2+)</name>
        <dbReference type="ChEBI" id="CHEBI:18420"/>
    </cofactor>
    <text evidence="1">Manganese or magnesium. Binds 1 divalent metal ion per monomer in the absence of substrate. May bind a second metal ion after substrate binding.</text>
</comment>
<comment type="subcellular location">
    <subcellularLocation>
        <location evidence="1">Cytoplasm</location>
    </subcellularLocation>
</comment>
<comment type="similarity">
    <text evidence="1">Belongs to the RNase HII family.</text>
</comment>
<feature type="chain" id="PRO_1000091637" description="Ribonuclease HII">
    <location>
        <begin position="1"/>
        <end position="198"/>
    </location>
</feature>
<feature type="domain" description="RNase H type-2" evidence="2">
    <location>
        <begin position="2"/>
        <end position="192"/>
    </location>
</feature>
<feature type="binding site" evidence="1">
    <location>
        <position position="8"/>
    </location>
    <ligand>
        <name>a divalent metal cation</name>
        <dbReference type="ChEBI" id="CHEBI:60240"/>
    </ligand>
</feature>
<feature type="binding site" evidence="1">
    <location>
        <position position="9"/>
    </location>
    <ligand>
        <name>a divalent metal cation</name>
        <dbReference type="ChEBI" id="CHEBI:60240"/>
    </ligand>
</feature>
<feature type="binding site" evidence="1">
    <location>
        <position position="101"/>
    </location>
    <ligand>
        <name>a divalent metal cation</name>
        <dbReference type="ChEBI" id="CHEBI:60240"/>
    </ligand>
</feature>
<dbReference type="EC" id="3.1.26.4" evidence="1"/>
<dbReference type="EMBL" id="CP001034">
    <property type="protein sequence ID" value="ACB84958.1"/>
    <property type="molecule type" value="Genomic_DNA"/>
</dbReference>
<dbReference type="RefSeq" id="WP_012447833.1">
    <property type="nucleotide sequence ID" value="NZ_CP144221.1"/>
</dbReference>
<dbReference type="SMR" id="B2A2P0"/>
<dbReference type="FunCoup" id="B2A2P0">
    <property type="interactions" value="398"/>
</dbReference>
<dbReference type="STRING" id="457570.Nther_1375"/>
<dbReference type="KEGG" id="nth:Nther_1375"/>
<dbReference type="eggNOG" id="COG0164">
    <property type="taxonomic scope" value="Bacteria"/>
</dbReference>
<dbReference type="HOGENOM" id="CLU_036532_3_2_9"/>
<dbReference type="InParanoid" id="B2A2P0"/>
<dbReference type="OrthoDB" id="9803420at2"/>
<dbReference type="Proteomes" id="UP000001683">
    <property type="component" value="Chromosome"/>
</dbReference>
<dbReference type="GO" id="GO:0005737">
    <property type="term" value="C:cytoplasm"/>
    <property type="evidence" value="ECO:0007669"/>
    <property type="project" value="UniProtKB-SubCell"/>
</dbReference>
<dbReference type="GO" id="GO:0032299">
    <property type="term" value="C:ribonuclease H2 complex"/>
    <property type="evidence" value="ECO:0007669"/>
    <property type="project" value="TreeGrafter"/>
</dbReference>
<dbReference type="GO" id="GO:0030145">
    <property type="term" value="F:manganese ion binding"/>
    <property type="evidence" value="ECO:0007669"/>
    <property type="project" value="UniProtKB-UniRule"/>
</dbReference>
<dbReference type="GO" id="GO:0003723">
    <property type="term" value="F:RNA binding"/>
    <property type="evidence" value="ECO:0007669"/>
    <property type="project" value="InterPro"/>
</dbReference>
<dbReference type="GO" id="GO:0004523">
    <property type="term" value="F:RNA-DNA hybrid ribonuclease activity"/>
    <property type="evidence" value="ECO:0007669"/>
    <property type="project" value="UniProtKB-UniRule"/>
</dbReference>
<dbReference type="GO" id="GO:0043137">
    <property type="term" value="P:DNA replication, removal of RNA primer"/>
    <property type="evidence" value="ECO:0007669"/>
    <property type="project" value="TreeGrafter"/>
</dbReference>
<dbReference type="GO" id="GO:0006298">
    <property type="term" value="P:mismatch repair"/>
    <property type="evidence" value="ECO:0007669"/>
    <property type="project" value="TreeGrafter"/>
</dbReference>
<dbReference type="CDD" id="cd07182">
    <property type="entry name" value="RNase_HII_bacteria_HII_like"/>
    <property type="match status" value="1"/>
</dbReference>
<dbReference type="Gene3D" id="3.30.420.10">
    <property type="entry name" value="Ribonuclease H-like superfamily/Ribonuclease H"/>
    <property type="match status" value="1"/>
</dbReference>
<dbReference type="HAMAP" id="MF_00052_B">
    <property type="entry name" value="RNase_HII_B"/>
    <property type="match status" value="1"/>
</dbReference>
<dbReference type="InterPro" id="IPR022898">
    <property type="entry name" value="RNase_HII"/>
</dbReference>
<dbReference type="InterPro" id="IPR001352">
    <property type="entry name" value="RNase_HII/HIII"/>
</dbReference>
<dbReference type="InterPro" id="IPR024567">
    <property type="entry name" value="RNase_HII/HIII_dom"/>
</dbReference>
<dbReference type="InterPro" id="IPR012337">
    <property type="entry name" value="RNaseH-like_sf"/>
</dbReference>
<dbReference type="InterPro" id="IPR036397">
    <property type="entry name" value="RNaseH_sf"/>
</dbReference>
<dbReference type="NCBIfam" id="NF000595">
    <property type="entry name" value="PRK00015.1-3"/>
    <property type="match status" value="1"/>
</dbReference>
<dbReference type="PANTHER" id="PTHR10954">
    <property type="entry name" value="RIBONUCLEASE H2 SUBUNIT A"/>
    <property type="match status" value="1"/>
</dbReference>
<dbReference type="PANTHER" id="PTHR10954:SF18">
    <property type="entry name" value="RIBONUCLEASE HII"/>
    <property type="match status" value="1"/>
</dbReference>
<dbReference type="Pfam" id="PF01351">
    <property type="entry name" value="RNase_HII"/>
    <property type="match status" value="1"/>
</dbReference>
<dbReference type="SUPFAM" id="SSF53098">
    <property type="entry name" value="Ribonuclease H-like"/>
    <property type="match status" value="1"/>
</dbReference>
<dbReference type="PROSITE" id="PS51975">
    <property type="entry name" value="RNASE_H_2"/>
    <property type="match status" value="1"/>
</dbReference>
<name>RNH2_NATTJ</name>
<organism>
    <name type="scientific">Natranaerobius thermophilus (strain ATCC BAA-1301 / DSM 18059 / JW/NM-WN-LF)</name>
    <dbReference type="NCBI Taxonomy" id="457570"/>
    <lineage>
        <taxon>Bacteria</taxon>
        <taxon>Bacillati</taxon>
        <taxon>Bacillota</taxon>
        <taxon>Clostridia</taxon>
        <taxon>Natranaerobiales</taxon>
        <taxon>Natranaerobiaceae</taxon>
        <taxon>Natranaerobius</taxon>
    </lineage>
</organism>
<sequence>MMYYCGIDEAGFGAGAAQVYVSACVLDPQKPINESLTDSKQLTPKKRELLAEEIKQDALTWCIATASVEEIEKLNIRKATILAMKRSLEGLTVKPDMVYIDGINSPEVPFPVETVVKGDSKIPAISAASILAKVARDNRMLEYDEQYPEYGFKDHKGYLTKNHIKAIQKYGPSPIHRKTYKPIKKIIDNQKNQQLELF</sequence>
<gene>
    <name evidence="1" type="primary">rnhB</name>
    <name type="ordered locus">Nther_1375</name>
</gene>